<proteinExistence type="inferred from homology"/>
<evidence type="ECO:0000250" key="1"/>
<evidence type="ECO:0000255" key="2">
    <source>
        <dbReference type="PROSITE-ProRule" id="PRU00794"/>
    </source>
</evidence>
<evidence type="ECO:0000256" key="3">
    <source>
        <dbReference type="SAM" id="MobiDB-lite"/>
    </source>
</evidence>
<evidence type="ECO:0000305" key="4"/>
<gene>
    <name type="primary">mutT3</name>
    <name type="ordered locus">MT0426</name>
</gene>
<comment type="function">
    <text evidence="1">May be involved in the GO system responsible for removing an oxidatively damaged form of guanine (7,8-dihydro-8-oxoguanine, 8-oxo-dGTP) from DNA and the nucleotide pool. 8-oxo-dGTP is inserted opposite dA and dC residues of template DNA with almost equal efficiency thus leading to A.T to G.C transversions. MutT specifically degrades 8-oxo-dGTP to the monophosphate (By similarity).</text>
</comment>
<comment type="catalytic activity">
    <reaction>
        <text>8-oxo-dGTP + H2O = 8-oxo-dGMP + diphosphate + H(+)</text>
        <dbReference type="Rhea" id="RHEA:31575"/>
        <dbReference type="ChEBI" id="CHEBI:15377"/>
        <dbReference type="ChEBI" id="CHEBI:15378"/>
        <dbReference type="ChEBI" id="CHEBI:33019"/>
        <dbReference type="ChEBI" id="CHEBI:63224"/>
        <dbReference type="ChEBI" id="CHEBI:77896"/>
        <dbReference type="EC" id="3.6.1.55"/>
    </reaction>
</comment>
<comment type="cofactor">
    <cofactor evidence="1">
        <name>Mg(2+)</name>
        <dbReference type="ChEBI" id="CHEBI:18420"/>
    </cofactor>
    <cofactor evidence="1">
        <name>Mn(2+)</name>
        <dbReference type="ChEBI" id="CHEBI:29035"/>
    </cofactor>
</comment>
<comment type="similarity">
    <text evidence="4">Belongs to the Nudix hydrolase family.</text>
</comment>
<reference key="1">
    <citation type="journal article" date="2002" name="J. Bacteriol.">
        <title>Whole-genome comparison of Mycobacterium tuberculosis clinical and laboratory strains.</title>
        <authorList>
            <person name="Fleischmann R.D."/>
            <person name="Alland D."/>
            <person name="Eisen J.A."/>
            <person name="Carpenter L."/>
            <person name="White O."/>
            <person name="Peterson J.D."/>
            <person name="DeBoy R.T."/>
            <person name="Dodson R.J."/>
            <person name="Gwinn M.L."/>
            <person name="Haft D.H."/>
            <person name="Hickey E.K."/>
            <person name="Kolonay J.F."/>
            <person name="Nelson W.C."/>
            <person name="Umayam L.A."/>
            <person name="Ermolaeva M.D."/>
            <person name="Salzberg S.L."/>
            <person name="Delcher A."/>
            <person name="Utterback T.R."/>
            <person name="Weidman J.F."/>
            <person name="Khouri H.M."/>
            <person name="Gill J."/>
            <person name="Mikula A."/>
            <person name="Bishai W."/>
            <person name="Jacobs W.R. Jr."/>
            <person name="Venter J.C."/>
            <person name="Fraser C.M."/>
        </authorList>
    </citation>
    <scope>NUCLEOTIDE SEQUENCE [LARGE SCALE GENOMIC DNA]</scope>
    <source>
        <strain>CDC 1551 / Oshkosh</strain>
    </source>
</reference>
<keyword id="KW-0227">DNA damage</keyword>
<keyword id="KW-0234">DNA repair</keyword>
<keyword id="KW-0235">DNA replication</keyword>
<keyword id="KW-0378">Hydrolase</keyword>
<keyword id="KW-0460">Magnesium</keyword>
<keyword id="KW-0464">Manganese</keyword>
<keyword id="KW-0479">Metal-binding</keyword>
<keyword id="KW-0515">Mutator protein</keyword>
<keyword id="KW-1185">Reference proteome</keyword>
<feature type="chain" id="PRO_0000427927" description="Putative 8-oxo-dGTP diphosphatase 3">
    <location>
        <begin position="1"/>
        <end position="217"/>
    </location>
</feature>
<feature type="domain" description="Nudix hydrolase" evidence="2">
    <location>
        <begin position="30"/>
        <end position="164"/>
    </location>
</feature>
<feature type="region of interest" description="Disordered" evidence="3">
    <location>
        <begin position="67"/>
        <end position="92"/>
    </location>
</feature>
<feature type="short sequence motif" description="Nudix box">
    <location>
        <begin position="70"/>
        <end position="91"/>
    </location>
</feature>
<feature type="binding site" evidence="1">
    <location>
        <position position="70"/>
    </location>
    <ligand>
        <name>Mg(2+)</name>
        <dbReference type="ChEBI" id="CHEBI:18420"/>
    </ligand>
</feature>
<feature type="binding site" evidence="1">
    <location>
        <position position="85"/>
    </location>
    <ligand>
        <name>Mg(2+)</name>
        <dbReference type="ChEBI" id="CHEBI:18420"/>
    </ligand>
</feature>
<feature type="binding site" evidence="1">
    <location>
        <position position="88"/>
    </location>
    <ligand>
        <name>Mg(2+)</name>
        <dbReference type="ChEBI" id="CHEBI:18420"/>
    </ligand>
</feature>
<feature type="binding site" evidence="1">
    <location>
        <position position="89"/>
    </location>
    <ligand>
        <name>Mg(2+)</name>
        <dbReference type="ChEBI" id="CHEBI:18420"/>
    </ligand>
</feature>
<dbReference type="EC" id="3.6.1.55"/>
<dbReference type="EMBL" id="AE000516">
    <property type="protein sequence ID" value="AAK44650.1"/>
    <property type="molecule type" value="Genomic_DNA"/>
</dbReference>
<dbReference type="PIR" id="C70629">
    <property type="entry name" value="C70629"/>
</dbReference>
<dbReference type="SMR" id="P9WIX8"/>
<dbReference type="KEGG" id="mtc:MT0426"/>
<dbReference type="PATRIC" id="fig|83331.31.peg.455"/>
<dbReference type="HOGENOM" id="CLU_083334_2_0_11"/>
<dbReference type="Proteomes" id="UP000001020">
    <property type="component" value="Chromosome"/>
</dbReference>
<dbReference type="GO" id="GO:0035539">
    <property type="term" value="F:8-oxo-7,8-dihydrodeoxyguanosine triphosphate pyrophosphatase activity"/>
    <property type="evidence" value="ECO:0007669"/>
    <property type="project" value="UniProtKB-EC"/>
</dbReference>
<dbReference type="GO" id="GO:0046872">
    <property type="term" value="F:metal ion binding"/>
    <property type="evidence" value="ECO:0007669"/>
    <property type="project" value="UniProtKB-KW"/>
</dbReference>
<dbReference type="GO" id="GO:0006281">
    <property type="term" value="P:DNA repair"/>
    <property type="evidence" value="ECO:0007669"/>
    <property type="project" value="UniProtKB-KW"/>
</dbReference>
<dbReference type="GO" id="GO:0006260">
    <property type="term" value="P:DNA replication"/>
    <property type="evidence" value="ECO:0007669"/>
    <property type="project" value="UniProtKB-KW"/>
</dbReference>
<dbReference type="CDD" id="cd18877">
    <property type="entry name" value="NUDIX_Hydrolase"/>
    <property type="match status" value="1"/>
</dbReference>
<dbReference type="Gene3D" id="3.90.79.10">
    <property type="entry name" value="Nucleoside Triphosphate Pyrophosphohydrolase"/>
    <property type="match status" value="1"/>
</dbReference>
<dbReference type="InterPro" id="IPR020476">
    <property type="entry name" value="Nudix_hydrolase"/>
</dbReference>
<dbReference type="InterPro" id="IPR015797">
    <property type="entry name" value="NUDIX_hydrolase-like_dom_sf"/>
</dbReference>
<dbReference type="InterPro" id="IPR020084">
    <property type="entry name" value="NUDIX_hydrolase_CS"/>
</dbReference>
<dbReference type="InterPro" id="IPR000086">
    <property type="entry name" value="NUDIX_hydrolase_dom"/>
</dbReference>
<dbReference type="PANTHER" id="PTHR43046:SF2">
    <property type="entry name" value="8-OXO-DGTP DIPHOSPHATASE-RELATED"/>
    <property type="match status" value="1"/>
</dbReference>
<dbReference type="PANTHER" id="PTHR43046">
    <property type="entry name" value="GDP-MANNOSE MANNOSYL HYDROLASE"/>
    <property type="match status" value="1"/>
</dbReference>
<dbReference type="Pfam" id="PF00293">
    <property type="entry name" value="NUDIX"/>
    <property type="match status" value="1"/>
</dbReference>
<dbReference type="PRINTS" id="PR00502">
    <property type="entry name" value="NUDIXFAMILY"/>
</dbReference>
<dbReference type="SUPFAM" id="SSF55811">
    <property type="entry name" value="Nudix"/>
    <property type="match status" value="1"/>
</dbReference>
<dbReference type="PROSITE" id="PS51462">
    <property type="entry name" value="NUDIX"/>
    <property type="match status" value="1"/>
</dbReference>
<dbReference type="PROSITE" id="PS00893">
    <property type="entry name" value="NUDIX_BOX"/>
    <property type="match status" value="1"/>
</dbReference>
<name>MUTT3_MYCTO</name>
<accession>P9WIX8</accession>
<accession>L0T5A7</accession>
<accession>P96259</accession>
<accession>Q7D9V1</accession>
<sequence length="217" mass="23499">MPSCPPAYSEQVRGDGDGWVVSDSGVAYWGRYGAAGLLLRAPRPDGTPAVLLQHRALWSHQGGTWGLPGGARDSHETPEQTAVRESSEEAGLSAERLEVRATVVTAEVCGVDDTHWTYTTVVADAGELLDTVPNRESAELRWVAENEVADLPLHPGFAASWQRLRTAPATVPLARCDERRQRLPRTIQIEAGVFLWCTPGDADQAPSPLGRRISSLL</sequence>
<protein>
    <recommendedName>
        <fullName>Putative 8-oxo-dGTP diphosphatase 3</fullName>
        <shortName>8-oxo-dGTPase</shortName>
        <ecNumber>3.6.1.55</ecNumber>
    </recommendedName>
    <alternativeName>
        <fullName>7,8-dihydro-8-oxoguanine-triphosphatase 3</fullName>
    </alternativeName>
    <alternativeName>
        <fullName>Mutator protein MutT3</fullName>
    </alternativeName>
    <alternativeName>
        <fullName>dGTP pyrophosphohydrolase 3</fullName>
    </alternativeName>
</protein>
<organism>
    <name type="scientific">Mycobacterium tuberculosis (strain CDC 1551 / Oshkosh)</name>
    <dbReference type="NCBI Taxonomy" id="83331"/>
    <lineage>
        <taxon>Bacteria</taxon>
        <taxon>Bacillati</taxon>
        <taxon>Actinomycetota</taxon>
        <taxon>Actinomycetes</taxon>
        <taxon>Mycobacteriales</taxon>
        <taxon>Mycobacteriaceae</taxon>
        <taxon>Mycobacterium</taxon>
        <taxon>Mycobacterium tuberculosis complex</taxon>
    </lineage>
</organism>